<protein>
    <recommendedName>
        <fullName evidence="1">Recombination-associated protein RdgC</fullName>
    </recommendedName>
</protein>
<reference key="1">
    <citation type="journal article" date="2003" name="J. Bacteriol.">
        <title>Comparative analyses of the complete genome sequences of Pierce's disease and citrus variegated chlorosis strains of Xylella fastidiosa.</title>
        <authorList>
            <person name="Van Sluys M.A."/>
            <person name="de Oliveira M.C."/>
            <person name="Monteiro-Vitorello C.B."/>
            <person name="Miyaki C.Y."/>
            <person name="Furlan L.R."/>
            <person name="Camargo L.E.A."/>
            <person name="da Silva A.C.R."/>
            <person name="Moon D.H."/>
            <person name="Takita M.A."/>
            <person name="Lemos E.G.M."/>
            <person name="Machado M.A."/>
            <person name="Ferro M.I.T."/>
            <person name="da Silva F.R."/>
            <person name="Goldman M.H.S."/>
            <person name="Goldman G.H."/>
            <person name="Lemos M.V.F."/>
            <person name="El-Dorry H."/>
            <person name="Tsai S.M."/>
            <person name="Carrer H."/>
            <person name="Carraro D.M."/>
            <person name="de Oliveira R.C."/>
            <person name="Nunes L.R."/>
            <person name="Siqueira W.J."/>
            <person name="Coutinho L.L."/>
            <person name="Kimura E.T."/>
            <person name="Ferro E.S."/>
            <person name="Harakava R."/>
            <person name="Kuramae E.E."/>
            <person name="Marino C.L."/>
            <person name="Giglioti E."/>
            <person name="Abreu I.L."/>
            <person name="Alves L.M.C."/>
            <person name="do Amaral A.M."/>
            <person name="Baia G.S."/>
            <person name="Blanco S.R."/>
            <person name="Brito M.S."/>
            <person name="Cannavan F.S."/>
            <person name="Celestino A.V."/>
            <person name="da Cunha A.F."/>
            <person name="Fenille R.C."/>
            <person name="Ferro J.A."/>
            <person name="Formighieri E.F."/>
            <person name="Kishi L.T."/>
            <person name="Leoni S.G."/>
            <person name="Oliveira A.R."/>
            <person name="Rosa V.E. Jr."/>
            <person name="Sassaki F.T."/>
            <person name="Sena J.A.D."/>
            <person name="de Souza A.A."/>
            <person name="Truffi D."/>
            <person name="Tsukumo F."/>
            <person name="Yanai G.M."/>
            <person name="Zaros L.G."/>
            <person name="Civerolo E.L."/>
            <person name="Simpson A.J.G."/>
            <person name="Almeida N.F. Jr."/>
            <person name="Setubal J.C."/>
            <person name="Kitajima J.P."/>
        </authorList>
    </citation>
    <scope>NUCLEOTIDE SEQUENCE [LARGE SCALE GENOMIC DNA]</scope>
    <source>
        <strain>Temecula1 / ATCC 700964</strain>
    </source>
</reference>
<comment type="function">
    <text evidence="1">May be involved in recombination.</text>
</comment>
<comment type="subcellular location">
    <subcellularLocation>
        <location evidence="1">Cytoplasm</location>
        <location evidence="1">Nucleoid</location>
    </subcellularLocation>
</comment>
<comment type="similarity">
    <text evidence="1">Belongs to the RdgC family.</text>
</comment>
<dbReference type="EMBL" id="AE009442">
    <property type="protein sequence ID" value="AAO29416.1"/>
    <property type="molecule type" value="Genomic_DNA"/>
</dbReference>
<dbReference type="RefSeq" id="WP_004088756.1">
    <property type="nucleotide sequence ID" value="NC_004556.1"/>
</dbReference>
<dbReference type="SMR" id="Q87B84"/>
<dbReference type="KEGG" id="xft:PD_1574"/>
<dbReference type="HOGENOM" id="CLU_052038_1_1_6"/>
<dbReference type="Proteomes" id="UP000002516">
    <property type="component" value="Chromosome"/>
</dbReference>
<dbReference type="GO" id="GO:0043590">
    <property type="term" value="C:bacterial nucleoid"/>
    <property type="evidence" value="ECO:0007669"/>
    <property type="project" value="TreeGrafter"/>
</dbReference>
<dbReference type="GO" id="GO:0005737">
    <property type="term" value="C:cytoplasm"/>
    <property type="evidence" value="ECO:0007669"/>
    <property type="project" value="UniProtKB-UniRule"/>
</dbReference>
<dbReference type="GO" id="GO:0003690">
    <property type="term" value="F:double-stranded DNA binding"/>
    <property type="evidence" value="ECO:0007669"/>
    <property type="project" value="TreeGrafter"/>
</dbReference>
<dbReference type="GO" id="GO:0006310">
    <property type="term" value="P:DNA recombination"/>
    <property type="evidence" value="ECO:0007669"/>
    <property type="project" value="UniProtKB-UniRule"/>
</dbReference>
<dbReference type="GO" id="GO:0000018">
    <property type="term" value="P:regulation of DNA recombination"/>
    <property type="evidence" value="ECO:0007669"/>
    <property type="project" value="TreeGrafter"/>
</dbReference>
<dbReference type="HAMAP" id="MF_00194">
    <property type="entry name" value="RdgC"/>
    <property type="match status" value="1"/>
</dbReference>
<dbReference type="InterPro" id="IPR007476">
    <property type="entry name" value="RdgC"/>
</dbReference>
<dbReference type="NCBIfam" id="NF001464">
    <property type="entry name" value="PRK00321.1-5"/>
    <property type="match status" value="1"/>
</dbReference>
<dbReference type="NCBIfam" id="NF001465">
    <property type="entry name" value="PRK00321.1-6"/>
    <property type="match status" value="1"/>
</dbReference>
<dbReference type="PANTHER" id="PTHR38103">
    <property type="entry name" value="RECOMBINATION-ASSOCIATED PROTEIN RDGC"/>
    <property type="match status" value="1"/>
</dbReference>
<dbReference type="PANTHER" id="PTHR38103:SF1">
    <property type="entry name" value="RECOMBINATION-ASSOCIATED PROTEIN RDGC"/>
    <property type="match status" value="1"/>
</dbReference>
<dbReference type="Pfam" id="PF04381">
    <property type="entry name" value="RdgC"/>
    <property type="match status" value="1"/>
</dbReference>
<organism>
    <name type="scientific">Xylella fastidiosa (strain Temecula1 / ATCC 700964)</name>
    <dbReference type="NCBI Taxonomy" id="183190"/>
    <lineage>
        <taxon>Bacteria</taxon>
        <taxon>Pseudomonadati</taxon>
        <taxon>Pseudomonadota</taxon>
        <taxon>Gammaproteobacteria</taxon>
        <taxon>Lysobacterales</taxon>
        <taxon>Lysobacteraceae</taxon>
        <taxon>Xylella</taxon>
    </lineage>
</organism>
<gene>
    <name evidence="1" type="primary">rdgC</name>
    <name type="ordered locus">PD_1574</name>
</gene>
<evidence type="ECO:0000255" key="1">
    <source>
        <dbReference type="HAMAP-Rule" id="MF_00194"/>
    </source>
</evidence>
<name>RDGC_XYLFT</name>
<proteinExistence type="inferred from homology"/>
<accession>Q87B84</accession>
<keyword id="KW-0963">Cytoplasm</keyword>
<keyword id="KW-0233">DNA recombination</keyword>
<keyword id="KW-1185">Reference proteome</keyword>
<feature type="chain" id="PRO_0000211759" description="Recombination-associated protein RdgC">
    <location>
        <begin position="1"/>
        <end position="302"/>
    </location>
</feature>
<sequence>MFFRNLTLFRFPTSLDFSQIDSILPNARLRPVGPLEMTSRGFISPFGREEQEVLNQRQGDFLWLTVGSEDKILPASVVNDLLTRKCSEIEEKKGHPPGGRERKRIKDDLIHELLPRAFVKNSRIDAMLDLRYGYVAVDTASRKAAETVISEIRDLLGSFPALPLNAEISIRSMLTSWIAGEPLPEHLNLGDECEMKDATEGGAIIKCQHQALRCEEIDKHLEVGKQVSKLALILDDHVSFVLGDDLVIRKLKFLDGMLDQLEHSDTDGIRAELDARFALMSAEIRRLFLLLEVPLKLSKANN</sequence>